<feature type="initiator methionine" description="Removed" evidence="1">
    <location>
        <position position="1"/>
    </location>
</feature>
<feature type="chain" id="PRO_0000127795" description="Probable sulredoxin">
    <location>
        <begin position="2"/>
        <end position="109"/>
    </location>
</feature>
<feature type="domain" description="Rieske" evidence="2">
    <location>
        <begin position="3"/>
        <end position="107"/>
    </location>
</feature>
<feature type="binding site" evidence="2">
    <location>
        <position position="43"/>
    </location>
    <ligand>
        <name>[2Fe-2S] cluster</name>
        <dbReference type="ChEBI" id="CHEBI:190135"/>
    </ligand>
</feature>
<feature type="binding site" evidence="2">
    <location>
        <position position="45"/>
    </location>
    <ligand>
        <name>[2Fe-2S] cluster</name>
        <dbReference type="ChEBI" id="CHEBI:190135"/>
    </ligand>
</feature>
<feature type="binding site" evidence="2">
    <location>
        <position position="62"/>
    </location>
    <ligand>
        <name>[2Fe-2S] cluster</name>
        <dbReference type="ChEBI" id="CHEBI:190135"/>
    </ligand>
</feature>
<feature type="binding site" evidence="2">
    <location>
        <position position="65"/>
    </location>
    <ligand>
        <name>[2Fe-2S] cluster</name>
        <dbReference type="ChEBI" id="CHEBI:190135"/>
    </ligand>
</feature>
<organism>
    <name type="scientific">Saccharolobus solfataricus (strain ATCC 35092 / DSM 1617 / JCM 11322 / P2)</name>
    <name type="common">Sulfolobus solfataricus</name>
    <dbReference type="NCBI Taxonomy" id="273057"/>
    <lineage>
        <taxon>Archaea</taxon>
        <taxon>Thermoproteota</taxon>
        <taxon>Thermoprotei</taxon>
        <taxon>Sulfolobales</taxon>
        <taxon>Sulfolobaceae</taxon>
        <taxon>Saccharolobus</taxon>
    </lineage>
</organism>
<keyword id="KW-0001">2Fe-2S</keyword>
<keyword id="KW-0963">Cytoplasm</keyword>
<keyword id="KW-0249">Electron transport</keyword>
<keyword id="KW-0408">Iron</keyword>
<keyword id="KW-0411">Iron-sulfur</keyword>
<keyword id="KW-0479">Metal-binding</keyword>
<keyword id="KW-0560">Oxidoreductase</keyword>
<keyword id="KW-1185">Reference proteome</keyword>
<keyword id="KW-0813">Transport</keyword>
<proteinExistence type="inferred from homology"/>
<reference key="1">
    <citation type="journal article" date="2001" name="Proc. Natl. Acad. Sci. U.S.A.">
        <title>The complete genome of the crenarchaeon Sulfolobus solfataricus P2.</title>
        <authorList>
            <person name="She Q."/>
            <person name="Singh R.K."/>
            <person name="Confalonieri F."/>
            <person name="Zivanovic Y."/>
            <person name="Allard G."/>
            <person name="Awayez M.J."/>
            <person name="Chan-Weiher C.C.-Y."/>
            <person name="Clausen I.G."/>
            <person name="Curtis B.A."/>
            <person name="De Moors A."/>
            <person name="Erauso G."/>
            <person name="Fletcher C."/>
            <person name="Gordon P.M.K."/>
            <person name="Heikamp-de Jong I."/>
            <person name="Jeffries A.C."/>
            <person name="Kozera C.J."/>
            <person name="Medina N."/>
            <person name="Peng X."/>
            <person name="Thi-Ngoc H.P."/>
            <person name="Redder P."/>
            <person name="Schenk M.E."/>
            <person name="Theriault C."/>
            <person name="Tolstrup N."/>
            <person name="Charlebois R.L."/>
            <person name="Doolittle W.F."/>
            <person name="Duguet M."/>
            <person name="Gaasterland T."/>
            <person name="Garrett R.A."/>
            <person name="Ragan M.A."/>
            <person name="Sensen C.W."/>
            <person name="Van der Oost J."/>
        </authorList>
    </citation>
    <scope>NUCLEOTIDE SEQUENCE [LARGE SCALE GENOMIC DNA]</scope>
    <source>
        <strain>ATCC 35092 / DSM 1617 / JCM 11322 / P2</strain>
    </source>
</reference>
<comment type="cofactor">
    <cofactor evidence="2">
        <name>[2Fe-2S] cluster</name>
        <dbReference type="ChEBI" id="CHEBI:190135"/>
    </cofactor>
    <text evidence="2">Binds 1 [2Fe-2S] cluster per subunit.</text>
</comment>
<comment type="subcellular location">
    <subcellularLocation>
        <location evidence="1">Cytoplasm</location>
    </subcellularLocation>
</comment>
<comment type="similarity">
    <text evidence="3">Belongs to the SDX family.</text>
</comment>
<comment type="sequence caution" evidence="3">
    <conflict type="erroneous initiation">
        <sequence resource="EMBL-CDS" id="AAK42999"/>
    </conflict>
</comment>
<name>SDX_SACS2</name>
<protein>
    <recommendedName>
        <fullName>Probable sulredoxin</fullName>
    </recommendedName>
</protein>
<gene>
    <name type="primary">sdx</name>
    <name type="ordered locus">SSO2891</name>
</gene>
<accession>Q97UV1</accession>
<sequence length="109" mass="12227">MVWKRTISAKALEKAKSAAVKVEDKVVFIANIKGTLYAMDAVCSHARCILDQLDEEKLTVKCYCHQALFDLRSGKMLEPPYVAPDAPKEKLGLKTYQIRDNGGWIEVDV</sequence>
<evidence type="ECO:0000250" key="1"/>
<evidence type="ECO:0000255" key="2">
    <source>
        <dbReference type="PROSITE-ProRule" id="PRU00628"/>
    </source>
</evidence>
<evidence type="ECO:0000305" key="3"/>
<dbReference type="EMBL" id="AE006641">
    <property type="protein sequence ID" value="AAK42999.1"/>
    <property type="status" value="ALT_INIT"/>
    <property type="molecule type" value="Genomic_DNA"/>
</dbReference>
<dbReference type="PIR" id="H90467">
    <property type="entry name" value="H90467"/>
</dbReference>
<dbReference type="RefSeq" id="WP_009990804.1">
    <property type="nucleotide sequence ID" value="NC_002754.1"/>
</dbReference>
<dbReference type="SMR" id="Q97UV1"/>
<dbReference type="STRING" id="273057.SSO2891"/>
<dbReference type="PaxDb" id="273057-SSO2891"/>
<dbReference type="EnsemblBacteria" id="AAK42999">
    <property type="protein sequence ID" value="AAK42999"/>
    <property type="gene ID" value="SSO2891"/>
</dbReference>
<dbReference type="GeneID" id="44128619"/>
<dbReference type="KEGG" id="sso:SSO2891"/>
<dbReference type="PATRIC" id="fig|273057.12.peg.2979"/>
<dbReference type="eggNOG" id="arCOG02854">
    <property type="taxonomic scope" value="Archaea"/>
</dbReference>
<dbReference type="HOGENOM" id="CLU_055690_5_4_2"/>
<dbReference type="InParanoid" id="Q97UV1"/>
<dbReference type="PhylomeDB" id="Q97UV1"/>
<dbReference type="Proteomes" id="UP000001974">
    <property type="component" value="Chromosome"/>
</dbReference>
<dbReference type="GO" id="GO:0005737">
    <property type="term" value="C:cytoplasm"/>
    <property type="evidence" value="ECO:0007669"/>
    <property type="project" value="UniProtKB-SubCell"/>
</dbReference>
<dbReference type="GO" id="GO:0051537">
    <property type="term" value="F:2 iron, 2 sulfur cluster binding"/>
    <property type="evidence" value="ECO:0000318"/>
    <property type="project" value="GO_Central"/>
</dbReference>
<dbReference type="GO" id="GO:0046872">
    <property type="term" value="F:metal ion binding"/>
    <property type="evidence" value="ECO:0007669"/>
    <property type="project" value="UniProtKB-KW"/>
</dbReference>
<dbReference type="GO" id="GO:0016491">
    <property type="term" value="F:oxidoreductase activity"/>
    <property type="evidence" value="ECO:0007669"/>
    <property type="project" value="UniProtKB-KW"/>
</dbReference>
<dbReference type="CDD" id="cd03467">
    <property type="entry name" value="Rieske"/>
    <property type="match status" value="1"/>
</dbReference>
<dbReference type="FunFam" id="2.102.10.10:FF:000038">
    <property type="entry name" value="Rieske (2Fe-2S) protein"/>
    <property type="match status" value="1"/>
</dbReference>
<dbReference type="Gene3D" id="2.102.10.10">
    <property type="entry name" value="Rieske [2Fe-2S] iron-sulphur domain"/>
    <property type="match status" value="1"/>
</dbReference>
<dbReference type="InterPro" id="IPR017941">
    <property type="entry name" value="Rieske_2Fe-2S"/>
</dbReference>
<dbReference type="InterPro" id="IPR036922">
    <property type="entry name" value="Rieske_2Fe-2S_sf"/>
</dbReference>
<dbReference type="InterPro" id="IPR053457">
    <property type="entry name" value="SDX-like"/>
</dbReference>
<dbReference type="NCBIfam" id="NF041174">
    <property type="entry name" value="SDX_Thmprot"/>
    <property type="match status" value="1"/>
</dbReference>
<dbReference type="PANTHER" id="PTHR21496">
    <property type="entry name" value="FERREDOXIN-RELATED"/>
    <property type="match status" value="1"/>
</dbReference>
<dbReference type="PANTHER" id="PTHR21496:SF24">
    <property type="entry name" value="SULREDOXIN-RELATED"/>
    <property type="match status" value="1"/>
</dbReference>
<dbReference type="Pfam" id="PF00355">
    <property type="entry name" value="Rieske"/>
    <property type="match status" value="1"/>
</dbReference>
<dbReference type="SUPFAM" id="SSF50022">
    <property type="entry name" value="ISP domain"/>
    <property type="match status" value="1"/>
</dbReference>
<dbReference type="PROSITE" id="PS51296">
    <property type="entry name" value="RIESKE"/>
    <property type="match status" value="1"/>
</dbReference>